<reference key="1">
    <citation type="journal article" date="1991" name="Virology">
        <title>Limited sequence variation in human T-lymphotropic virus type 1 isolates from North American and African patients.</title>
        <authorList>
            <person name="Paine E."/>
            <person name="Garcia J."/>
            <person name="Philpott T.C."/>
            <person name="Shaw G."/>
            <person name="Ratner L."/>
        </authorList>
    </citation>
    <scope>NUCLEOTIDE SEQUENCE [GENOMIC RNA]</scope>
</reference>
<keyword id="KW-0165">Cleavage on pair of basic residues</keyword>
<keyword id="KW-0175">Coiled coil</keyword>
<keyword id="KW-1015">Disulfide bond</keyword>
<keyword id="KW-1169">Fusion of virus membrane with host cell membrane</keyword>
<keyword id="KW-1168">Fusion of virus membrane with host membrane</keyword>
<keyword id="KW-0325">Glycoprotein</keyword>
<keyword id="KW-1032">Host cell membrane</keyword>
<keyword id="KW-1043">Host membrane</keyword>
<keyword id="KW-0945">Host-virus interaction</keyword>
<keyword id="KW-0449">Lipoprotein</keyword>
<keyword id="KW-0472">Membrane</keyword>
<keyword id="KW-0564">Palmitate</keyword>
<keyword id="KW-0732">Signal</keyword>
<keyword id="KW-0812">Transmembrane</keyword>
<keyword id="KW-1133">Transmembrane helix</keyword>
<keyword id="KW-1161">Viral attachment to host cell</keyword>
<keyword id="KW-0261">Viral envelope protein</keyword>
<keyword id="KW-1162">Viral penetration into host cytoplasm</keyword>
<keyword id="KW-0946">Virion</keyword>
<keyword id="KW-1160">Virus entry into host cell</keyword>
<evidence type="ECO:0000250" key="1"/>
<evidence type="ECO:0000255" key="2"/>
<sequence length="488" mass="53946">MGKFLATLILFFQFCPLILSDYSPSCCTLTIGVSSYHSKPCNPAQPVCSWTLDLLALSADQALQPPCPNLVSYSSYHATYSLYLFPHWIKKPNRNGGGYYSASYSDPCSLKCPYLGCQSWTCPYTGAVSSPYWKFQQDVNFTQEVSRLNINLHFSKCGFPFSLLVDAPGYDPIWFLNTEPSQLPPTAPPLLPHSNLDHILEPSIPWKSKLLTLVQLTLQSTNYTCIVCIDRASLSTWHVLYSPNVSVPSSSSTPLLYPSLALPAPHLTLPFNWTHCFDPQIQAIVSSPCHNSLILPPFSLSPVPTLGSRSRRAVPVAVWLVSALAMGAGMAGGITGSMSLASGRSLLHEVDKDISQLTQAIVKNHKNLLKIAQYAAQNRRGLDLLFWEQGGLCKALQEQCCFLNITNSHVSILQERPPLENRVLTGWGLNWDLGLSQWAREALQTGITLVALLLLVILAGPCILRQLRHLPSRVRYPHYSLINPESSL</sequence>
<organism>
    <name type="scientific">Human T-cell leukemia virus 1 (isolate Zaire EL subtype B)</name>
    <name type="common">HTLV-1</name>
    <dbReference type="NCBI Taxonomy" id="39015"/>
    <lineage>
        <taxon>Viruses</taxon>
        <taxon>Riboviria</taxon>
        <taxon>Pararnavirae</taxon>
        <taxon>Artverviricota</taxon>
        <taxon>Revtraviricetes</taxon>
        <taxon>Ortervirales</taxon>
        <taxon>Retroviridae</taxon>
        <taxon>Orthoretrovirinae</taxon>
        <taxon>Deltaretrovirus</taxon>
        <taxon>Primate T-lymphotropic virus 1</taxon>
    </lineage>
</organism>
<dbReference type="EMBL" id="M67514">
    <property type="protein sequence ID" value="AAB50169.1"/>
    <property type="molecule type" value="Genomic_RNA"/>
</dbReference>
<dbReference type="SMR" id="Q03817"/>
<dbReference type="GlyCosmos" id="Q03817">
    <property type="glycosylation" value="5 sites, No reported glycans"/>
</dbReference>
<dbReference type="GO" id="GO:0020002">
    <property type="term" value="C:host cell plasma membrane"/>
    <property type="evidence" value="ECO:0007669"/>
    <property type="project" value="UniProtKB-SubCell"/>
</dbReference>
<dbReference type="GO" id="GO:0016020">
    <property type="term" value="C:membrane"/>
    <property type="evidence" value="ECO:0007669"/>
    <property type="project" value="UniProtKB-KW"/>
</dbReference>
<dbReference type="GO" id="GO:0019031">
    <property type="term" value="C:viral envelope"/>
    <property type="evidence" value="ECO:0007669"/>
    <property type="project" value="UniProtKB-KW"/>
</dbReference>
<dbReference type="GO" id="GO:0055036">
    <property type="term" value="C:virion membrane"/>
    <property type="evidence" value="ECO:0007669"/>
    <property type="project" value="UniProtKB-SubCell"/>
</dbReference>
<dbReference type="GO" id="GO:0019064">
    <property type="term" value="P:fusion of virus membrane with host plasma membrane"/>
    <property type="evidence" value="ECO:0007669"/>
    <property type="project" value="UniProtKB-KW"/>
</dbReference>
<dbReference type="GO" id="GO:0046718">
    <property type="term" value="P:symbiont entry into host cell"/>
    <property type="evidence" value="ECO:0007669"/>
    <property type="project" value="UniProtKB-KW"/>
</dbReference>
<dbReference type="GO" id="GO:0019062">
    <property type="term" value="P:virion attachment to host cell"/>
    <property type="evidence" value="ECO:0007669"/>
    <property type="project" value="UniProtKB-KW"/>
</dbReference>
<dbReference type="CDD" id="cd09851">
    <property type="entry name" value="HTLV-1-like_HR1-HR2"/>
    <property type="match status" value="1"/>
</dbReference>
<dbReference type="Gene3D" id="1.10.287.210">
    <property type="match status" value="1"/>
</dbReference>
<dbReference type="InterPro" id="IPR018154">
    <property type="entry name" value="TLV/ENV_coat_polyprotein"/>
</dbReference>
<dbReference type="PANTHER" id="PTHR10424:SF81">
    <property type="entry name" value="ERVV2 PROTEIN"/>
    <property type="match status" value="1"/>
</dbReference>
<dbReference type="PANTHER" id="PTHR10424">
    <property type="entry name" value="VIRAL ENVELOPE PROTEIN"/>
    <property type="match status" value="1"/>
</dbReference>
<dbReference type="Pfam" id="PF00429">
    <property type="entry name" value="TLV_coat"/>
    <property type="match status" value="1"/>
</dbReference>
<dbReference type="SUPFAM" id="SSF58069">
    <property type="entry name" value="Virus ectodomain"/>
    <property type="match status" value="1"/>
</dbReference>
<name>ENV_HTL1F</name>
<organismHost>
    <name type="scientific">Homo sapiens</name>
    <name type="common">Human</name>
    <dbReference type="NCBI Taxonomy" id="9606"/>
</organismHost>
<comment type="function">
    <text evidence="1">The surface protein (SU) attaches the virus to the host cell by binding to its receptor. This interaction triggers the refolding of the transmembrane protein (TM) and is thought to activate its fusogenic potential by unmasking its fusion peptide. Fusion occurs at the host cell plasma membrane (By similarity).</text>
</comment>
<comment type="function">
    <text evidence="1">The transmembrane protein (TM) acts as a class I viral fusion protein. Under the current model, the protein has at least 3 conformational states: pre-fusion native state, pre-hairpin intermediate state, and post-fusion hairpin state. During viral and target cell membrane fusion, the coiled coil regions (heptad repeats) assume a trimer-of-hairpins structure, positioning the fusion peptide in close proximity to the C-terminal region of the ectodomain. The formation of this structure appears to drive apposition and subsequent fusion of viral and target cell membranes. Membranes fusion leads to delivery of the nucleocapsid into the cytoplasm (By similarity).</text>
</comment>
<comment type="subunit">
    <text evidence="1">The mature envelope protein (Env) consists of a trimer of SU-TM heterodimers attached by a labile interchain disulfide bond.</text>
</comment>
<comment type="subcellular location">
    <molecule>Transmembrane protein</molecule>
    <subcellularLocation>
        <location evidence="1">Virion membrane</location>
        <topology evidence="1">Single-pass type I membrane protein</topology>
    </subcellularLocation>
    <subcellularLocation>
        <location evidence="1">Host cell membrane</location>
        <topology evidence="1">Single-pass type I membrane protein</topology>
    </subcellularLocation>
    <text evidence="1">It is probably concentrated at the site of budding and incorporated into the virions possibly by contacts between the cytoplasmic tail of Env and the N-terminus of Gag.</text>
</comment>
<comment type="subcellular location">
    <molecule>Surface protein</molecule>
    <subcellularLocation>
        <location evidence="1">Virion membrane</location>
        <topology evidence="1">Peripheral membrane protein</topology>
    </subcellularLocation>
    <subcellularLocation>
        <location evidence="1">Host cell membrane</location>
        <topology evidence="1">Peripheral membrane protein</topology>
    </subcellularLocation>
    <text evidence="1">The surface protein is not anchored to the viral envelope, but associates with the extravirion surface through its binding to TM. It is probably concentrated at the site of budding and incorporated into the virions possibly by contacts between the cytoplasmic tail of Env and the N-terminus of Gag (By similarity).</text>
</comment>
<comment type="domain">
    <text evidence="1">The 17 amino acids long immunosuppressive region is present in many retroviral envelope proteins. Synthetic peptides derived from this relatively conserved sequence inhibit immune function in vitro and in vivo (By similarity).</text>
</comment>
<comment type="PTM">
    <text evidence="1">Specific enzymatic cleavages in vivo yield mature proteins. Envelope glycoproteins are synthesized as an inactive precursor that is N-glycosylated and processed likely by host cell furin or by a furin-like protease in the Golgi to yield the mature SU and TM proteins. The cleavage site between SU and TM requires the minimal sequence [KR]-X-[KR]-R (By similarity).</text>
</comment>
<comment type="PTM">
    <text evidence="1">The CXXC motif is highly conserved across a broad range of retroviral envelope proteins. It is thought to participate in the formation of a labile disulfide bond possibly with the CX6CC motif present in the transmembrane protein. Isomerization of the intersubunit disulfide bond to an SU intrachain disulfide bond is thought to occur upon receptor recognition in order to allow membrane fusion (By similarity).</text>
</comment>
<comment type="PTM">
    <text evidence="1">The transmembrane protein is palmitoylated.</text>
</comment>
<comment type="miscellaneous">
    <text>HTLV-1 lineages are divided in four clades, A (Cosmopolitan), B (Central African group), C (Melanesian group) and D (New Central African group).</text>
</comment>
<gene>
    <name type="primary">env</name>
</gene>
<protein>
    <recommendedName>
        <fullName>Envelope glycoprotein gp62</fullName>
    </recommendedName>
    <alternativeName>
        <fullName>Env polyprotein</fullName>
    </alternativeName>
    <component>
        <recommendedName>
            <fullName>Surface protein</fullName>
            <shortName>SU</shortName>
        </recommendedName>
        <alternativeName>
            <fullName>Glycoprotein 46</fullName>
            <shortName>gp46</shortName>
        </alternativeName>
    </component>
    <component>
        <recommendedName>
            <fullName>Transmembrane protein</fullName>
            <shortName>TM</shortName>
        </recommendedName>
        <alternativeName>
            <fullName>Glycoprotein 21</fullName>
            <shortName>gp21</shortName>
        </alternativeName>
    </component>
</protein>
<feature type="signal peptide" evidence="2">
    <location>
        <begin position="1"/>
        <end position="20"/>
    </location>
</feature>
<feature type="chain" id="PRO_0000038752" description="Envelope glycoprotein gp62">
    <location>
        <begin position="21"/>
        <end position="488"/>
    </location>
</feature>
<feature type="chain" id="PRO_0000038753" description="Surface protein" evidence="1">
    <location>
        <begin position="21"/>
        <end position="312"/>
    </location>
</feature>
<feature type="chain" id="PRO_0000038754" description="Transmembrane protein" evidence="1">
    <location>
        <begin position="313"/>
        <end position="488"/>
    </location>
</feature>
<feature type="topological domain" description="Extracellular" evidence="2">
    <location>
        <begin position="21"/>
        <end position="442"/>
    </location>
</feature>
<feature type="transmembrane region" description="Helical" evidence="2">
    <location>
        <begin position="443"/>
        <end position="463"/>
    </location>
</feature>
<feature type="topological domain" description="Cytoplasmic" evidence="2">
    <location>
        <begin position="464"/>
        <end position="488"/>
    </location>
</feature>
<feature type="region of interest" description="Fusion peptide" evidence="2">
    <location>
        <begin position="313"/>
        <end position="333"/>
    </location>
</feature>
<feature type="region of interest" description="Immunosuppression" evidence="1">
    <location>
        <begin position="376"/>
        <end position="392"/>
    </location>
</feature>
<feature type="coiled-coil region" evidence="2">
    <location>
        <begin position="341"/>
        <end position="387"/>
    </location>
</feature>
<feature type="coiled-coil region" evidence="2">
    <location>
        <begin position="397"/>
        <end position="429"/>
    </location>
</feature>
<feature type="short sequence motif" description="CXXC">
    <location>
        <begin position="225"/>
        <end position="228"/>
    </location>
</feature>
<feature type="short sequence motif" description="CX6CC">
    <location>
        <begin position="393"/>
        <end position="401"/>
    </location>
</feature>
<feature type="site" description="Cleavage; by host furin" evidence="1">
    <location>
        <begin position="312"/>
        <end position="313"/>
    </location>
</feature>
<feature type="lipid moiety-binding region" description="S-palmitoyl cysteine; by host" evidence="1">
    <location>
        <position position="462"/>
    </location>
</feature>
<feature type="glycosylation site" description="N-linked (GlcNAc...) asparagine; by host" evidence="2">
    <location>
        <position position="140"/>
    </location>
</feature>
<feature type="glycosylation site" description="N-linked (GlcNAc...) asparagine; by host" evidence="2">
    <location>
        <position position="222"/>
    </location>
</feature>
<feature type="glycosylation site" description="N-linked (GlcNAc...) asparagine; by host" evidence="2">
    <location>
        <position position="244"/>
    </location>
</feature>
<feature type="glycosylation site" description="N-linked (GlcNAc...) asparagine; by host" evidence="2">
    <location>
        <position position="272"/>
    </location>
</feature>
<feature type="glycosylation site" description="N-linked (GlcNAc...) asparagine; by host" evidence="2">
    <location>
        <position position="404"/>
    </location>
</feature>
<feature type="disulfide bond" description="Interchain (between SU and TM chains, or C-228 with C-401); in linked form" evidence="1">
    <location>
        <begin position="225"/>
        <end position="401"/>
    </location>
</feature>
<feature type="disulfide bond" evidence="1">
    <location>
        <begin position="225"/>
        <end position="228"/>
    </location>
</feature>
<feature type="disulfide bond" evidence="1">
    <location>
        <begin position="393"/>
        <end position="400"/>
    </location>
</feature>
<accession>Q03817</accession>
<proteinExistence type="inferred from homology"/>